<gene>
    <name evidence="1" type="primary">murA</name>
    <name type="ordered locus">CCNA_02435</name>
</gene>
<comment type="function">
    <text evidence="1">Cell wall formation. Adds enolpyruvyl to UDP-N-acetylglucosamine.</text>
</comment>
<comment type="catalytic activity">
    <reaction evidence="1">
        <text>phosphoenolpyruvate + UDP-N-acetyl-alpha-D-glucosamine = UDP-N-acetyl-3-O-(1-carboxyvinyl)-alpha-D-glucosamine + phosphate</text>
        <dbReference type="Rhea" id="RHEA:18681"/>
        <dbReference type="ChEBI" id="CHEBI:43474"/>
        <dbReference type="ChEBI" id="CHEBI:57705"/>
        <dbReference type="ChEBI" id="CHEBI:58702"/>
        <dbReference type="ChEBI" id="CHEBI:68483"/>
        <dbReference type="EC" id="2.5.1.7"/>
    </reaction>
</comment>
<comment type="pathway">
    <text evidence="1">Cell wall biogenesis; peptidoglycan biosynthesis.</text>
</comment>
<comment type="subcellular location">
    <subcellularLocation>
        <location evidence="1">Cytoplasm</location>
    </subcellularLocation>
</comment>
<comment type="similarity">
    <text evidence="1">Belongs to the EPSP synthase family. MurA subfamily.</text>
</comment>
<dbReference type="EC" id="2.5.1.7" evidence="1"/>
<dbReference type="EMBL" id="CP001340">
    <property type="protein sequence ID" value="ACL95900.1"/>
    <property type="molecule type" value="Genomic_DNA"/>
</dbReference>
<dbReference type="RefSeq" id="WP_010920208.1">
    <property type="nucleotide sequence ID" value="NC_011916.1"/>
</dbReference>
<dbReference type="RefSeq" id="YP_002517808.1">
    <property type="nucleotide sequence ID" value="NC_011916.1"/>
</dbReference>
<dbReference type="SMR" id="B8GZB1"/>
<dbReference type="GeneID" id="7331669"/>
<dbReference type="KEGG" id="ccs:CCNA_02435"/>
<dbReference type="PATRIC" id="fig|565050.3.peg.2388"/>
<dbReference type="HOGENOM" id="CLU_027387_0_0_5"/>
<dbReference type="OrthoDB" id="9803760at2"/>
<dbReference type="PhylomeDB" id="B8GZB1"/>
<dbReference type="UniPathway" id="UPA00219"/>
<dbReference type="Proteomes" id="UP000001364">
    <property type="component" value="Chromosome"/>
</dbReference>
<dbReference type="GO" id="GO:0005737">
    <property type="term" value="C:cytoplasm"/>
    <property type="evidence" value="ECO:0007669"/>
    <property type="project" value="UniProtKB-SubCell"/>
</dbReference>
<dbReference type="GO" id="GO:0008760">
    <property type="term" value="F:UDP-N-acetylglucosamine 1-carboxyvinyltransferase activity"/>
    <property type="evidence" value="ECO:0007669"/>
    <property type="project" value="UniProtKB-UniRule"/>
</dbReference>
<dbReference type="GO" id="GO:0051301">
    <property type="term" value="P:cell division"/>
    <property type="evidence" value="ECO:0007669"/>
    <property type="project" value="UniProtKB-KW"/>
</dbReference>
<dbReference type="GO" id="GO:0071555">
    <property type="term" value="P:cell wall organization"/>
    <property type="evidence" value="ECO:0007669"/>
    <property type="project" value="UniProtKB-KW"/>
</dbReference>
<dbReference type="GO" id="GO:0009252">
    <property type="term" value="P:peptidoglycan biosynthetic process"/>
    <property type="evidence" value="ECO:0007669"/>
    <property type="project" value="UniProtKB-UniRule"/>
</dbReference>
<dbReference type="GO" id="GO:0008360">
    <property type="term" value="P:regulation of cell shape"/>
    <property type="evidence" value="ECO:0007669"/>
    <property type="project" value="UniProtKB-KW"/>
</dbReference>
<dbReference type="GO" id="GO:0019277">
    <property type="term" value="P:UDP-N-acetylgalactosamine biosynthetic process"/>
    <property type="evidence" value="ECO:0007669"/>
    <property type="project" value="InterPro"/>
</dbReference>
<dbReference type="CDD" id="cd01555">
    <property type="entry name" value="UdpNAET"/>
    <property type="match status" value="1"/>
</dbReference>
<dbReference type="FunFam" id="3.65.10.10:FF:000001">
    <property type="entry name" value="UDP-N-acetylglucosamine 1-carboxyvinyltransferase"/>
    <property type="match status" value="1"/>
</dbReference>
<dbReference type="Gene3D" id="3.65.10.10">
    <property type="entry name" value="Enolpyruvate transferase domain"/>
    <property type="match status" value="2"/>
</dbReference>
<dbReference type="HAMAP" id="MF_00111">
    <property type="entry name" value="MurA"/>
    <property type="match status" value="1"/>
</dbReference>
<dbReference type="InterPro" id="IPR001986">
    <property type="entry name" value="Enolpyruvate_Tfrase_dom"/>
</dbReference>
<dbReference type="InterPro" id="IPR036968">
    <property type="entry name" value="Enolpyruvate_Tfrase_sf"/>
</dbReference>
<dbReference type="InterPro" id="IPR050068">
    <property type="entry name" value="MurA_subfamily"/>
</dbReference>
<dbReference type="InterPro" id="IPR013792">
    <property type="entry name" value="RNA3'P_cycl/enolpyr_Trfase_a/b"/>
</dbReference>
<dbReference type="InterPro" id="IPR005750">
    <property type="entry name" value="UDP_GlcNAc_COvinyl_MurA"/>
</dbReference>
<dbReference type="NCBIfam" id="TIGR01072">
    <property type="entry name" value="murA"/>
    <property type="match status" value="1"/>
</dbReference>
<dbReference type="NCBIfam" id="NF006873">
    <property type="entry name" value="PRK09369.1"/>
    <property type="match status" value="1"/>
</dbReference>
<dbReference type="PANTHER" id="PTHR43783">
    <property type="entry name" value="UDP-N-ACETYLGLUCOSAMINE 1-CARBOXYVINYLTRANSFERASE"/>
    <property type="match status" value="1"/>
</dbReference>
<dbReference type="PANTHER" id="PTHR43783:SF1">
    <property type="entry name" value="UDP-N-ACETYLGLUCOSAMINE 1-CARBOXYVINYLTRANSFERASE"/>
    <property type="match status" value="1"/>
</dbReference>
<dbReference type="Pfam" id="PF00275">
    <property type="entry name" value="EPSP_synthase"/>
    <property type="match status" value="1"/>
</dbReference>
<dbReference type="SUPFAM" id="SSF55205">
    <property type="entry name" value="EPT/RTPC-like"/>
    <property type="match status" value="1"/>
</dbReference>
<organism>
    <name type="scientific">Caulobacter vibrioides (strain NA1000 / CB15N)</name>
    <name type="common">Caulobacter crescentus</name>
    <dbReference type="NCBI Taxonomy" id="565050"/>
    <lineage>
        <taxon>Bacteria</taxon>
        <taxon>Pseudomonadati</taxon>
        <taxon>Pseudomonadota</taxon>
        <taxon>Alphaproteobacteria</taxon>
        <taxon>Caulobacterales</taxon>
        <taxon>Caulobacteraceae</taxon>
        <taxon>Caulobacter</taxon>
    </lineage>
</organism>
<sequence length="429" mass="45270">MDRIAIIGGAQLNGTIPVSGAKNSAIKLMAASLLTDEPLRLTNMPRLADTRFLGKLLTRLGVQVTESDGSDGQQTLLHAPEITSGFAPYDLVRQMRASFNVLGPLVARSGQAKVSLPGGCTIGARPVDLHLQAIEALGAKIDLHEGYVYAQAPRGLKGAEIRFPFVSVGATEHAMLAAVLADGVSVIHNAACEPELVDLQECLNAMGAKVEGAGTPTVTITGVPRLHGATHAVIPDRIEMGTYAVAAAMAGGEVRLSNARPGLIDALLDKLKEAGASVEETADGCIIRRNGQRLTAVDIETAPFPGFATDLQAQFMALMTTAKGESRIRETIFENRFMHAPELMRLGADISVSGGEARVRGVDQLEGAQVMATDLRASVSLVIAGLVARGETTVSRIYHLDRGFERLEEKLGACGAQVRRIKGDGEAEL</sequence>
<evidence type="ECO:0000255" key="1">
    <source>
        <dbReference type="HAMAP-Rule" id="MF_00111"/>
    </source>
</evidence>
<accession>B8GZB1</accession>
<feature type="chain" id="PRO_1000192079" description="UDP-N-acetylglucosamine 1-carboxyvinyltransferase">
    <location>
        <begin position="1"/>
        <end position="429"/>
    </location>
</feature>
<feature type="active site" description="Proton donor" evidence="1">
    <location>
        <position position="120"/>
    </location>
</feature>
<feature type="binding site" evidence="1">
    <location>
        <begin position="22"/>
        <end position="23"/>
    </location>
    <ligand>
        <name>phosphoenolpyruvate</name>
        <dbReference type="ChEBI" id="CHEBI:58702"/>
    </ligand>
</feature>
<feature type="binding site" evidence="1">
    <location>
        <position position="96"/>
    </location>
    <ligand>
        <name>UDP-N-acetyl-alpha-D-glucosamine</name>
        <dbReference type="ChEBI" id="CHEBI:57705"/>
    </ligand>
</feature>
<feature type="binding site" evidence="1">
    <location>
        <begin position="125"/>
        <end position="129"/>
    </location>
    <ligand>
        <name>UDP-N-acetyl-alpha-D-glucosamine</name>
        <dbReference type="ChEBI" id="CHEBI:57705"/>
    </ligand>
</feature>
<feature type="binding site" evidence="1">
    <location>
        <position position="310"/>
    </location>
    <ligand>
        <name>UDP-N-acetyl-alpha-D-glucosamine</name>
        <dbReference type="ChEBI" id="CHEBI:57705"/>
    </ligand>
</feature>
<feature type="binding site" evidence="1">
    <location>
        <position position="332"/>
    </location>
    <ligand>
        <name>UDP-N-acetyl-alpha-D-glucosamine</name>
        <dbReference type="ChEBI" id="CHEBI:57705"/>
    </ligand>
</feature>
<feature type="modified residue" description="2-(S-cysteinyl)pyruvic acid O-phosphothioketal" evidence="1">
    <location>
        <position position="120"/>
    </location>
</feature>
<reference key="1">
    <citation type="journal article" date="2010" name="J. Bacteriol.">
        <title>The genetic basis of laboratory adaptation in Caulobacter crescentus.</title>
        <authorList>
            <person name="Marks M.E."/>
            <person name="Castro-Rojas C.M."/>
            <person name="Teiling C."/>
            <person name="Du L."/>
            <person name="Kapatral V."/>
            <person name="Walunas T.L."/>
            <person name="Crosson S."/>
        </authorList>
    </citation>
    <scope>NUCLEOTIDE SEQUENCE [LARGE SCALE GENOMIC DNA]</scope>
    <source>
        <strain>NA1000 / CB15N</strain>
    </source>
</reference>
<proteinExistence type="inferred from homology"/>
<name>MURA_CAUVN</name>
<keyword id="KW-0131">Cell cycle</keyword>
<keyword id="KW-0132">Cell division</keyword>
<keyword id="KW-0133">Cell shape</keyword>
<keyword id="KW-0961">Cell wall biogenesis/degradation</keyword>
<keyword id="KW-0963">Cytoplasm</keyword>
<keyword id="KW-0573">Peptidoglycan synthesis</keyword>
<keyword id="KW-0670">Pyruvate</keyword>
<keyword id="KW-1185">Reference proteome</keyword>
<keyword id="KW-0808">Transferase</keyword>
<protein>
    <recommendedName>
        <fullName evidence="1">UDP-N-acetylglucosamine 1-carboxyvinyltransferase</fullName>
        <ecNumber evidence="1">2.5.1.7</ecNumber>
    </recommendedName>
    <alternativeName>
        <fullName evidence="1">Enoylpyruvate transferase</fullName>
    </alternativeName>
    <alternativeName>
        <fullName evidence="1">UDP-N-acetylglucosamine enolpyruvyl transferase</fullName>
        <shortName evidence="1">EPT</shortName>
    </alternativeName>
</protein>